<reference key="1">
    <citation type="journal article" date="2008" name="PLoS ONE">
        <title>Genetic basis of virulence attenuation revealed by comparative genomic analysis of Mycobacterium tuberculosis strain H37Ra versus H37Rv.</title>
        <authorList>
            <person name="Zheng H."/>
            <person name="Lu L."/>
            <person name="Wang B."/>
            <person name="Pu S."/>
            <person name="Zhang X."/>
            <person name="Zhu G."/>
            <person name="Shi W."/>
            <person name="Zhang L."/>
            <person name="Wang H."/>
            <person name="Wang S."/>
            <person name="Zhao G."/>
            <person name="Zhang Y."/>
        </authorList>
    </citation>
    <scope>NUCLEOTIDE SEQUENCE [LARGE SCALE GENOMIC DNA]</scope>
    <source>
        <strain>ATCC 25177 / H37Ra</strain>
    </source>
</reference>
<proteinExistence type="inferred from homology"/>
<accession>A5U586</accession>
<organism>
    <name type="scientific">Mycobacterium tuberculosis (strain ATCC 25177 / H37Ra)</name>
    <dbReference type="NCBI Taxonomy" id="419947"/>
    <lineage>
        <taxon>Bacteria</taxon>
        <taxon>Bacillati</taxon>
        <taxon>Actinomycetota</taxon>
        <taxon>Actinomycetes</taxon>
        <taxon>Mycobacteriales</taxon>
        <taxon>Mycobacteriaceae</taxon>
        <taxon>Mycobacterium</taxon>
        <taxon>Mycobacterium tuberculosis complex</taxon>
    </lineage>
</organism>
<dbReference type="EC" id="1.8.4.10" evidence="1"/>
<dbReference type="EMBL" id="CP000611">
    <property type="protein sequence ID" value="ABQ74186.1"/>
    <property type="molecule type" value="Genomic_DNA"/>
</dbReference>
<dbReference type="RefSeq" id="WP_003412303.1">
    <property type="nucleotide sequence ID" value="NZ_CP016972.1"/>
</dbReference>
<dbReference type="SMR" id="A5U586"/>
<dbReference type="KEGG" id="mra:MRA_2416"/>
<dbReference type="eggNOG" id="COG0175">
    <property type="taxonomic scope" value="Bacteria"/>
</dbReference>
<dbReference type="HOGENOM" id="CLU_044089_2_0_11"/>
<dbReference type="Proteomes" id="UP000001988">
    <property type="component" value="Chromosome"/>
</dbReference>
<dbReference type="GO" id="GO:0005737">
    <property type="term" value="C:cytoplasm"/>
    <property type="evidence" value="ECO:0007669"/>
    <property type="project" value="UniProtKB-SubCell"/>
</dbReference>
<dbReference type="GO" id="GO:0051539">
    <property type="term" value="F:4 iron, 4 sulfur cluster binding"/>
    <property type="evidence" value="ECO:0007669"/>
    <property type="project" value="UniProtKB-UniRule"/>
</dbReference>
<dbReference type="GO" id="GO:0043866">
    <property type="term" value="F:adenylyl-sulfate reductase (thioredoxin) activity"/>
    <property type="evidence" value="ECO:0007669"/>
    <property type="project" value="UniProtKB-EC"/>
</dbReference>
<dbReference type="GO" id="GO:0046872">
    <property type="term" value="F:metal ion binding"/>
    <property type="evidence" value="ECO:0007669"/>
    <property type="project" value="UniProtKB-KW"/>
</dbReference>
<dbReference type="GO" id="GO:0004604">
    <property type="term" value="F:phosphoadenylyl-sulfate reductase (thioredoxin) activity"/>
    <property type="evidence" value="ECO:0007669"/>
    <property type="project" value="UniProtKB-UniRule"/>
</dbReference>
<dbReference type="GO" id="GO:0019344">
    <property type="term" value="P:cysteine biosynthetic process"/>
    <property type="evidence" value="ECO:0007669"/>
    <property type="project" value="InterPro"/>
</dbReference>
<dbReference type="GO" id="GO:0070814">
    <property type="term" value="P:hydrogen sulfide biosynthetic process"/>
    <property type="evidence" value="ECO:0007669"/>
    <property type="project" value="UniProtKB-UniRule"/>
</dbReference>
<dbReference type="GO" id="GO:0019379">
    <property type="term" value="P:sulfate assimilation, phosphoadenylyl sulfate reduction by phosphoadenylyl-sulfate reductase (thioredoxin)"/>
    <property type="evidence" value="ECO:0007669"/>
    <property type="project" value="UniProtKB-UniRule"/>
</dbReference>
<dbReference type="CDD" id="cd23945">
    <property type="entry name" value="PAPS_reductase"/>
    <property type="match status" value="1"/>
</dbReference>
<dbReference type="FunFam" id="3.40.50.620:FF:000136">
    <property type="entry name" value="Probable phosphoadenosine phosphosulfate reductase"/>
    <property type="match status" value="1"/>
</dbReference>
<dbReference type="Gene3D" id="3.40.50.620">
    <property type="entry name" value="HUPs"/>
    <property type="match status" value="1"/>
</dbReference>
<dbReference type="HAMAP" id="MF_00063">
    <property type="entry name" value="CysH"/>
    <property type="match status" value="1"/>
</dbReference>
<dbReference type="InterPro" id="IPR011798">
    <property type="entry name" value="APS_reductase"/>
</dbReference>
<dbReference type="InterPro" id="IPR004511">
    <property type="entry name" value="PAPS/APS_Rdtase"/>
</dbReference>
<dbReference type="InterPro" id="IPR002500">
    <property type="entry name" value="PAPS_reduct_dom"/>
</dbReference>
<dbReference type="InterPro" id="IPR014729">
    <property type="entry name" value="Rossmann-like_a/b/a_fold"/>
</dbReference>
<dbReference type="NCBIfam" id="TIGR02055">
    <property type="entry name" value="APS_reductase"/>
    <property type="match status" value="1"/>
</dbReference>
<dbReference type="NCBIfam" id="TIGR00434">
    <property type="entry name" value="cysH"/>
    <property type="match status" value="1"/>
</dbReference>
<dbReference type="NCBIfam" id="NF002537">
    <property type="entry name" value="PRK02090.1"/>
    <property type="match status" value="1"/>
</dbReference>
<dbReference type="PANTHER" id="PTHR46509">
    <property type="entry name" value="PHOSPHOADENOSINE PHOSPHOSULFATE REDUCTASE"/>
    <property type="match status" value="1"/>
</dbReference>
<dbReference type="PANTHER" id="PTHR46509:SF1">
    <property type="entry name" value="PHOSPHOADENOSINE PHOSPHOSULFATE REDUCTASE"/>
    <property type="match status" value="1"/>
</dbReference>
<dbReference type="Pfam" id="PF01507">
    <property type="entry name" value="PAPS_reduct"/>
    <property type="match status" value="1"/>
</dbReference>
<dbReference type="PIRSF" id="PIRSF000857">
    <property type="entry name" value="PAPS_reductase"/>
    <property type="match status" value="1"/>
</dbReference>
<dbReference type="SUPFAM" id="SSF52402">
    <property type="entry name" value="Adenine nucleotide alpha hydrolases-like"/>
    <property type="match status" value="1"/>
</dbReference>
<keyword id="KW-0963">Cytoplasm</keyword>
<keyword id="KW-0408">Iron</keyword>
<keyword id="KW-0411">Iron-sulfur</keyword>
<keyword id="KW-0479">Metal-binding</keyword>
<keyword id="KW-0560">Oxidoreductase</keyword>
<keyword id="KW-1185">Reference proteome</keyword>
<feature type="chain" id="PRO_1000008930" description="Adenosine 5'-phosphosulfate reductase">
    <location>
        <begin position="1"/>
        <end position="254"/>
    </location>
</feature>
<feature type="active site" description="Nucleophile; cysteine thiosulfonate intermediate" evidence="1">
    <location>
        <position position="249"/>
    </location>
</feature>
<feature type="binding site" evidence="1">
    <location>
        <position position="140"/>
    </location>
    <ligand>
        <name>[4Fe-4S] cluster</name>
        <dbReference type="ChEBI" id="CHEBI:49883"/>
    </ligand>
</feature>
<feature type="binding site" evidence="1">
    <location>
        <position position="141"/>
    </location>
    <ligand>
        <name>[4Fe-4S] cluster</name>
        <dbReference type="ChEBI" id="CHEBI:49883"/>
    </ligand>
</feature>
<feature type="binding site" evidence="1">
    <location>
        <position position="223"/>
    </location>
    <ligand>
        <name>[4Fe-4S] cluster</name>
        <dbReference type="ChEBI" id="CHEBI:49883"/>
    </ligand>
</feature>
<feature type="binding site" evidence="1">
    <location>
        <position position="226"/>
    </location>
    <ligand>
        <name>[4Fe-4S] cluster</name>
        <dbReference type="ChEBI" id="CHEBI:49883"/>
    </ligand>
</feature>
<name>CYSH_MYCTA</name>
<comment type="function">
    <text evidence="1">Catalyzes the formation of sulfite from adenosine 5'-phosphosulfate (APS) using thioredoxin as an electron donor.</text>
</comment>
<comment type="catalytic activity">
    <reaction evidence="1">
        <text>[thioredoxin]-disulfide + sulfite + AMP + 2 H(+) = adenosine 5'-phosphosulfate + [thioredoxin]-dithiol</text>
        <dbReference type="Rhea" id="RHEA:21976"/>
        <dbReference type="Rhea" id="RHEA-COMP:10698"/>
        <dbReference type="Rhea" id="RHEA-COMP:10700"/>
        <dbReference type="ChEBI" id="CHEBI:15378"/>
        <dbReference type="ChEBI" id="CHEBI:17359"/>
        <dbReference type="ChEBI" id="CHEBI:29950"/>
        <dbReference type="ChEBI" id="CHEBI:50058"/>
        <dbReference type="ChEBI" id="CHEBI:58243"/>
        <dbReference type="ChEBI" id="CHEBI:456215"/>
        <dbReference type="EC" id="1.8.4.10"/>
    </reaction>
</comment>
<comment type="cofactor">
    <cofactor evidence="1">
        <name>[4Fe-4S] cluster</name>
        <dbReference type="ChEBI" id="CHEBI:49883"/>
    </cofactor>
    <text evidence="1">Binds 1 [4Fe-4S] cluster per subunit.</text>
</comment>
<comment type="pathway">
    <text evidence="1">Sulfur metabolism; hydrogen sulfide biosynthesis; sulfite from sulfate.</text>
</comment>
<comment type="subcellular location">
    <subcellularLocation>
        <location evidence="1">Cytoplasm</location>
    </subcellularLocation>
</comment>
<comment type="similarity">
    <text evidence="1">Belongs to the PAPS reductase family. CysH subfamily.</text>
</comment>
<gene>
    <name evidence="1" type="primary">cysH</name>
    <name type="ordered locus">MRA_2416</name>
</gene>
<sequence>MSGETTRLTEPQLRELAARGAAELDGATATDMLRWTDETFGDIGGAGGGVSGHRGWTTCNYVVASNMADAVLVDLAAKVRPGVPVIFLDTGYHFVETIGTRDAIESVYDVRVLNVTPEHTVAEQDELLGKDLFARNPHECCRLRKVVPLGKTLRGYSAWVTGLRRVDAPTRANAPLVSFDETFKLVKVNPLAAWTDQDVQEYIADNDVLVNPLVREGYPSIGCAPCTAKPAEGADPRSGRWQGLAKTECGLHAS</sequence>
<protein>
    <recommendedName>
        <fullName evidence="1">Adenosine 5'-phosphosulfate reductase</fullName>
        <shortName evidence="1">APS reductase</shortName>
        <ecNumber evidence="1">1.8.4.10</ecNumber>
    </recommendedName>
    <alternativeName>
        <fullName evidence="1">5'-adenylylsulfate reductase</fullName>
    </alternativeName>
    <alternativeName>
        <fullName evidence="1">Thioredoxin-dependent 5'-adenylylsulfate reductase</fullName>
    </alternativeName>
</protein>
<evidence type="ECO:0000255" key="1">
    <source>
        <dbReference type="HAMAP-Rule" id="MF_00063"/>
    </source>
</evidence>